<accession>Q46H53</accession>
<dbReference type="EMBL" id="CP000095">
    <property type="protein sequence ID" value="AAZ59179.1"/>
    <property type="molecule type" value="Genomic_DNA"/>
</dbReference>
<dbReference type="RefSeq" id="WP_011294325.1">
    <property type="nucleotide sequence ID" value="NC_007335.2"/>
</dbReference>
<dbReference type="SMR" id="Q46H53"/>
<dbReference type="STRING" id="59920.PMN2A_1691"/>
<dbReference type="KEGG" id="pmn:PMN2A_1691"/>
<dbReference type="HOGENOM" id="CLU_217078_1_0_3"/>
<dbReference type="OrthoDB" id="427659at2"/>
<dbReference type="PhylomeDB" id="Q46H53"/>
<dbReference type="Proteomes" id="UP000002535">
    <property type="component" value="Chromosome"/>
</dbReference>
<dbReference type="GO" id="GO:0009539">
    <property type="term" value="C:photosystem II reaction center"/>
    <property type="evidence" value="ECO:0007669"/>
    <property type="project" value="InterPro"/>
</dbReference>
<dbReference type="GO" id="GO:0031676">
    <property type="term" value="C:plasma membrane-derived thylakoid membrane"/>
    <property type="evidence" value="ECO:0007669"/>
    <property type="project" value="UniProtKB-SubCell"/>
</dbReference>
<dbReference type="GO" id="GO:0015979">
    <property type="term" value="P:photosynthesis"/>
    <property type="evidence" value="ECO:0007669"/>
    <property type="project" value="UniProtKB-UniRule"/>
</dbReference>
<dbReference type="HAMAP" id="MF_00808">
    <property type="entry name" value="PSII_PsbT"/>
    <property type="match status" value="1"/>
</dbReference>
<dbReference type="InterPro" id="IPR001743">
    <property type="entry name" value="PSII_PsbT"/>
</dbReference>
<dbReference type="InterPro" id="IPR037268">
    <property type="entry name" value="PSII_PsbT_sf"/>
</dbReference>
<dbReference type="NCBIfam" id="NF008825">
    <property type="entry name" value="PRK11875.1"/>
    <property type="match status" value="1"/>
</dbReference>
<dbReference type="Pfam" id="PF01405">
    <property type="entry name" value="PsbT"/>
    <property type="match status" value="1"/>
</dbReference>
<dbReference type="SUPFAM" id="SSF161029">
    <property type="entry name" value="Photosystem II reaction center protein T, PsbT"/>
    <property type="match status" value="1"/>
</dbReference>
<name>PSBT_PROMT</name>
<comment type="function">
    <text evidence="1">Found at the monomer-monomer interface of the photosystem II (PS II) dimer, plays a role in assembly and dimerization of PSII. PSII is a light-driven water plastoquinone oxidoreductase, using light energy to abstract electrons from H(2)O, generating a proton gradient subsequently used for ATP formation.</text>
</comment>
<comment type="subunit">
    <text evidence="2">PSII is composed of 1 copy each of membrane proteins PsbA, PsbB, PsbC, PsbD, PsbE, PsbF, PsbH, PsbI, PsbJ, PsbK, PsbL, PsbM, PsbT, PsbX, PsbY, Psb30/Ycf12, peripheral proteins PsbO, CyanoQ (PsbQ), PsbU, PsbV and a large number of cofactors. It forms dimeric complexes.</text>
</comment>
<comment type="subcellular location">
    <subcellularLocation>
        <location evidence="1">Cellular thylakoid membrane</location>
        <topology evidence="1">Single-pass membrane protein</topology>
    </subcellularLocation>
</comment>
<comment type="similarity">
    <text evidence="1">Belongs to the PsbT family.</text>
</comment>
<proteinExistence type="inferred from homology"/>
<feature type="chain" id="PRO_1000047098" description="Photosystem II reaction center protein T">
    <location>
        <begin position="1"/>
        <end position="31"/>
    </location>
</feature>
<feature type="transmembrane region" description="Helical" evidence="1">
    <location>
        <begin position="3"/>
        <end position="23"/>
    </location>
</feature>
<organism>
    <name type="scientific">Prochlorococcus marinus (strain NATL2A)</name>
    <dbReference type="NCBI Taxonomy" id="59920"/>
    <lineage>
        <taxon>Bacteria</taxon>
        <taxon>Bacillati</taxon>
        <taxon>Cyanobacteriota</taxon>
        <taxon>Cyanophyceae</taxon>
        <taxon>Synechococcales</taxon>
        <taxon>Prochlorococcaceae</taxon>
        <taxon>Prochlorococcus</taxon>
    </lineage>
</organism>
<gene>
    <name evidence="1" type="primary">psbT</name>
    <name type="ordered locus">PMN2A_1691</name>
</gene>
<evidence type="ECO:0000255" key="1">
    <source>
        <dbReference type="HAMAP-Rule" id="MF_00808"/>
    </source>
</evidence>
<evidence type="ECO:0000305" key="2"/>
<reference key="1">
    <citation type="journal article" date="2007" name="PLoS Genet.">
        <title>Patterns and implications of gene gain and loss in the evolution of Prochlorococcus.</title>
        <authorList>
            <person name="Kettler G.C."/>
            <person name="Martiny A.C."/>
            <person name="Huang K."/>
            <person name="Zucker J."/>
            <person name="Coleman M.L."/>
            <person name="Rodrigue S."/>
            <person name="Chen F."/>
            <person name="Lapidus A."/>
            <person name="Ferriera S."/>
            <person name="Johnson J."/>
            <person name="Steglich C."/>
            <person name="Church G.M."/>
            <person name="Richardson P."/>
            <person name="Chisholm S.W."/>
        </authorList>
    </citation>
    <scope>NUCLEOTIDE SEQUENCE [LARGE SCALE GENOMIC DNA]</scope>
    <source>
        <strain>NATL2A</strain>
    </source>
</reference>
<protein>
    <recommendedName>
        <fullName evidence="1">Photosystem II reaction center protein T</fullName>
        <shortName evidence="1">PSII-T</shortName>
    </recommendedName>
</protein>
<sequence>MEAFSYVLILTLALVTLFFAVAFRDPPKYDK</sequence>
<keyword id="KW-0472">Membrane</keyword>
<keyword id="KW-0602">Photosynthesis</keyword>
<keyword id="KW-0604">Photosystem II</keyword>
<keyword id="KW-1185">Reference proteome</keyword>
<keyword id="KW-0793">Thylakoid</keyword>
<keyword id="KW-0812">Transmembrane</keyword>
<keyword id="KW-1133">Transmembrane helix</keyword>